<sequence length="102" mass="11630">MSDQEAKPSSEDLGDKKEGGDYIKLKVIGQDSSEIHFKVKMTTHLKKLKESYCQRQGVPMNSLRFLFEGQRISDHQTPKELGMEEEDVIEVYQEQTGGHSTI</sequence>
<evidence type="ECO:0000250" key="1"/>
<evidence type="ECO:0000250" key="2">
    <source>
        <dbReference type="UniProtKB" id="O57686"/>
    </source>
</evidence>
<evidence type="ECO:0000250" key="3">
    <source>
        <dbReference type="UniProtKB" id="P63165"/>
    </source>
</evidence>
<evidence type="ECO:0000250" key="4">
    <source>
        <dbReference type="UniProtKB" id="P63166"/>
    </source>
</evidence>
<evidence type="ECO:0000255" key="5">
    <source>
        <dbReference type="PROSITE-ProRule" id="PRU00214"/>
    </source>
</evidence>
<evidence type="ECO:0000305" key="6"/>
<gene>
    <name type="primary">sumo1</name>
</gene>
<feature type="chain" id="PRO_0000267622" description="Small ubiquitin-related modifier 1">
    <location>
        <begin position="1"/>
        <end position="98"/>
    </location>
</feature>
<feature type="propeptide" id="PRO_0000267623" evidence="1">
    <location>
        <begin position="99"/>
        <end position="102"/>
    </location>
</feature>
<feature type="domain" description="Ubiquitin-like" evidence="5">
    <location>
        <begin position="21"/>
        <end position="98"/>
    </location>
</feature>
<feature type="cross-link" description="Glycyl lysine isopeptide (Gly-Lys) (interchain with K-? in acceptor proteins)" evidence="5">
    <location>
        <position position="98"/>
    </location>
</feature>
<name>SUMO1_XENTR</name>
<reference key="1">
    <citation type="submission" date="2004-07" db="EMBL/GenBank/DDBJ databases">
        <authorList>
            <consortium name="NIH - Xenopus Gene Collection (XGC) project"/>
        </authorList>
    </citation>
    <scope>NUCLEOTIDE SEQUENCE [LARGE SCALE MRNA]</scope>
    <source>
        <tissue>Embryo</tissue>
    </source>
</reference>
<proteinExistence type="inferred from homology"/>
<keyword id="KW-1003">Cell membrane</keyword>
<keyword id="KW-0963">Cytoplasm</keyword>
<keyword id="KW-1017">Isopeptide bond</keyword>
<keyword id="KW-0472">Membrane</keyword>
<keyword id="KW-0539">Nucleus</keyword>
<keyword id="KW-1185">Reference proteome</keyword>
<keyword id="KW-0833">Ubl conjugation pathway</keyword>
<accession>Q6DEP7</accession>
<dbReference type="EMBL" id="BC077048">
    <property type="protein sequence ID" value="AAH77048.1"/>
    <property type="molecule type" value="mRNA"/>
</dbReference>
<dbReference type="RefSeq" id="NP_001005111.1">
    <property type="nucleotide sequence ID" value="NM_001005111.1"/>
</dbReference>
<dbReference type="SMR" id="Q6DEP7"/>
<dbReference type="FunCoup" id="Q6DEP7">
    <property type="interactions" value="3161"/>
</dbReference>
<dbReference type="STRING" id="8364.ENSXETP00000051987"/>
<dbReference type="PaxDb" id="8364-ENSXETP00000047766"/>
<dbReference type="DNASU" id="448691"/>
<dbReference type="GeneID" id="448691"/>
<dbReference type="KEGG" id="xtr:448691"/>
<dbReference type="AGR" id="Xenbase:XB-GENE-978491"/>
<dbReference type="CTD" id="7341"/>
<dbReference type="Xenbase" id="XB-GENE-978491">
    <property type="gene designation" value="sumo1"/>
</dbReference>
<dbReference type="eggNOG" id="KOG1769">
    <property type="taxonomic scope" value="Eukaryota"/>
</dbReference>
<dbReference type="HOGENOM" id="CLU_148322_0_0_1"/>
<dbReference type="InParanoid" id="Q6DEP7"/>
<dbReference type="OMA" id="DQSHAAR"/>
<dbReference type="OrthoDB" id="442921at2759"/>
<dbReference type="PhylomeDB" id="Q6DEP7"/>
<dbReference type="TreeFam" id="TF315116"/>
<dbReference type="Reactome" id="R-XTR-3065676">
    <property type="pathway name" value="SUMO is conjugated to E1 (UBA2:SAE1)"/>
</dbReference>
<dbReference type="Reactome" id="R-XTR-3065678">
    <property type="pathway name" value="SUMO is transferred from E1 to E2 (UBE2I, UBC9)"/>
</dbReference>
<dbReference type="Reactome" id="R-XTR-3065679">
    <property type="pathway name" value="SUMO is proteolytically processed"/>
</dbReference>
<dbReference type="Reactome" id="R-XTR-3108214">
    <property type="pathway name" value="SUMOylation of DNA damage response and repair proteins"/>
</dbReference>
<dbReference type="Reactome" id="R-XTR-3232118">
    <property type="pathway name" value="SUMOylation of transcription factors"/>
</dbReference>
<dbReference type="Reactome" id="R-XTR-3232142">
    <property type="pathway name" value="SUMOylation of ubiquitinylation proteins"/>
</dbReference>
<dbReference type="Reactome" id="R-XTR-3899300">
    <property type="pathway name" value="SUMOylation of transcription cofactors"/>
</dbReference>
<dbReference type="Reactome" id="R-XTR-4085377">
    <property type="pathway name" value="SUMOylation of SUMOylation proteins"/>
</dbReference>
<dbReference type="Reactome" id="R-XTR-4090294">
    <property type="pathway name" value="SUMOylation of intracellular receptors"/>
</dbReference>
<dbReference type="Reactome" id="R-XTR-4551638">
    <property type="pathway name" value="SUMOylation of chromatin organization proteins"/>
</dbReference>
<dbReference type="Reactome" id="R-XTR-4570464">
    <property type="pathway name" value="SUMOylation of RNA binding proteins"/>
</dbReference>
<dbReference type="Reactome" id="R-XTR-4615885">
    <property type="pathway name" value="SUMOylation of DNA replication proteins"/>
</dbReference>
<dbReference type="Reactome" id="R-XTR-4655427">
    <property type="pathway name" value="SUMOylation of DNA methylation proteins"/>
</dbReference>
<dbReference type="Reactome" id="R-XTR-4755510">
    <property type="pathway name" value="SUMOylation of immune response proteins"/>
</dbReference>
<dbReference type="Reactome" id="R-XTR-8866904">
    <property type="pathway name" value="Negative regulation of activity of TFAP2 (AP-2) family transcription factors"/>
</dbReference>
<dbReference type="Reactome" id="R-XTR-9615933">
    <property type="pathway name" value="Postmitotic nuclear pore complex (NPC) reformation"/>
</dbReference>
<dbReference type="Reactome" id="R-XTR-9793242">
    <property type="pathway name" value="SUMOylation of nuclear envelope proteins"/>
</dbReference>
<dbReference type="Reactome" id="R-XTR-9856649">
    <property type="pathway name" value="Transcriptional and post-translational regulation of MITF-M expression and activity"/>
</dbReference>
<dbReference type="Proteomes" id="UP000008143">
    <property type="component" value="Chromosome 9"/>
</dbReference>
<dbReference type="GO" id="GO:0005737">
    <property type="term" value="C:cytoplasm"/>
    <property type="evidence" value="ECO:0007669"/>
    <property type="project" value="UniProtKB-SubCell"/>
</dbReference>
<dbReference type="GO" id="GO:0031965">
    <property type="term" value="C:nuclear membrane"/>
    <property type="evidence" value="ECO:0007669"/>
    <property type="project" value="UniProtKB-SubCell"/>
</dbReference>
<dbReference type="GO" id="GO:0016607">
    <property type="term" value="C:nuclear speck"/>
    <property type="evidence" value="ECO:0007669"/>
    <property type="project" value="UniProtKB-SubCell"/>
</dbReference>
<dbReference type="GO" id="GO:0097165">
    <property type="term" value="C:nuclear stress granule"/>
    <property type="evidence" value="ECO:0000250"/>
    <property type="project" value="UniProtKB"/>
</dbReference>
<dbReference type="GO" id="GO:0005886">
    <property type="term" value="C:plasma membrane"/>
    <property type="evidence" value="ECO:0007669"/>
    <property type="project" value="UniProtKB-SubCell"/>
</dbReference>
<dbReference type="GO" id="GO:0016605">
    <property type="term" value="C:PML body"/>
    <property type="evidence" value="ECO:0007669"/>
    <property type="project" value="UniProtKB-SubCell"/>
</dbReference>
<dbReference type="GO" id="GO:0008134">
    <property type="term" value="F:transcription factor binding"/>
    <property type="evidence" value="ECO:0000250"/>
    <property type="project" value="AgBase"/>
</dbReference>
<dbReference type="GO" id="GO:0071276">
    <property type="term" value="P:cellular response to cadmium ion"/>
    <property type="evidence" value="ECO:0000250"/>
    <property type="project" value="UniProtKB"/>
</dbReference>
<dbReference type="GO" id="GO:0034605">
    <property type="term" value="P:cellular response to heat"/>
    <property type="evidence" value="ECO:0000250"/>
    <property type="project" value="UniProtKB"/>
</dbReference>
<dbReference type="GO" id="GO:0016925">
    <property type="term" value="P:protein sumoylation"/>
    <property type="evidence" value="ECO:0000250"/>
    <property type="project" value="AgBase"/>
</dbReference>
<dbReference type="CDD" id="cd16114">
    <property type="entry name" value="Ubl_SUMO1"/>
    <property type="match status" value="1"/>
</dbReference>
<dbReference type="FunFam" id="3.10.20.90:FF:000092">
    <property type="entry name" value="Small ubiquitin-related modifier"/>
    <property type="match status" value="1"/>
</dbReference>
<dbReference type="Gene3D" id="3.10.20.90">
    <property type="entry name" value="Phosphatidylinositol 3-kinase Catalytic Subunit, Chain A, domain 1"/>
    <property type="match status" value="1"/>
</dbReference>
<dbReference type="InterPro" id="IPR022617">
    <property type="entry name" value="Rad60/SUMO-like_dom"/>
</dbReference>
<dbReference type="InterPro" id="IPR046332">
    <property type="entry name" value="SUMO1_Ubl"/>
</dbReference>
<dbReference type="InterPro" id="IPR000626">
    <property type="entry name" value="Ubiquitin-like_dom"/>
</dbReference>
<dbReference type="InterPro" id="IPR029071">
    <property type="entry name" value="Ubiquitin-like_domsf"/>
</dbReference>
<dbReference type="PANTHER" id="PTHR10562">
    <property type="entry name" value="SMALL UBIQUITIN-RELATED MODIFIER"/>
    <property type="match status" value="1"/>
</dbReference>
<dbReference type="Pfam" id="PF11976">
    <property type="entry name" value="Rad60-SLD"/>
    <property type="match status" value="1"/>
</dbReference>
<dbReference type="SMART" id="SM00213">
    <property type="entry name" value="UBQ"/>
    <property type="match status" value="1"/>
</dbReference>
<dbReference type="SUPFAM" id="SSF54236">
    <property type="entry name" value="Ubiquitin-like"/>
    <property type="match status" value="1"/>
</dbReference>
<dbReference type="PROSITE" id="PS50053">
    <property type="entry name" value="UBIQUITIN_2"/>
    <property type="match status" value="1"/>
</dbReference>
<comment type="function">
    <text evidence="2 3">Ubiquitin-like protein that can be covalently attached to proteins as a monomer or a lysine-linked polymer (By similarity). Covalent attachment via an isopeptide bond to its substrates requires prior activation by the E1 complex sae1-sae2 and linkage to the E2 enzyme ube2i. This post-translational modification on lysine residues of proteins plays a crucial role in a number of cellular processes such as nuclear transport, DNA replication and repair, mitosis and signal transduction. Polymeric sumo1 chains are also susceptible to polyubiquitination which functions as a signal for proteasomal degradation of modified proteins (By similarity).</text>
</comment>
<comment type="subunit">
    <text evidence="2 3">Interacts with sae2, ube2i, ranbp2, pias1 and pias2 (By similarity). Interacts with sox9 and sox10 (By similarity). Covalently attached to a number of proteins (By similarity).</text>
</comment>
<comment type="subcellular location">
    <subcellularLocation>
        <location evidence="3">Nucleus membrane</location>
    </subcellularLocation>
    <subcellularLocation>
        <location evidence="4">Nucleus speckle</location>
    </subcellularLocation>
    <subcellularLocation>
        <location evidence="3">Cytoplasm</location>
    </subcellularLocation>
    <subcellularLocation>
        <location evidence="3">Nucleus</location>
        <location evidence="3">PML body</location>
    </subcellularLocation>
    <subcellularLocation>
        <location evidence="3">Cell membrane</location>
    </subcellularLocation>
    <subcellularLocation>
        <location evidence="3">Nucleus</location>
    </subcellularLocation>
</comment>
<comment type="PTM">
    <text evidence="3">Cleavage of precursor form by a sentrin-specific protease is necessary for function.</text>
</comment>
<comment type="similarity">
    <text evidence="6">Belongs to the ubiquitin family. SUMO subfamily.</text>
</comment>
<protein>
    <recommendedName>
        <fullName>Small ubiquitin-related modifier 1</fullName>
        <shortName>SUMO-1</shortName>
    </recommendedName>
</protein>
<organism>
    <name type="scientific">Xenopus tropicalis</name>
    <name type="common">Western clawed frog</name>
    <name type="synonym">Silurana tropicalis</name>
    <dbReference type="NCBI Taxonomy" id="8364"/>
    <lineage>
        <taxon>Eukaryota</taxon>
        <taxon>Metazoa</taxon>
        <taxon>Chordata</taxon>
        <taxon>Craniata</taxon>
        <taxon>Vertebrata</taxon>
        <taxon>Euteleostomi</taxon>
        <taxon>Amphibia</taxon>
        <taxon>Batrachia</taxon>
        <taxon>Anura</taxon>
        <taxon>Pipoidea</taxon>
        <taxon>Pipidae</taxon>
        <taxon>Xenopodinae</taxon>
        <taxon>Xenopus</taxon>
        <taxon>Silurana</taxon>
    </lineage>
</organism>